<accession>B8ESQ9</accession>
<evidence type="ECO:0000255" key="1">
    <source>
        <dbReference type="HAMAP-Rule" id="MF_00111"/>
    </source>
</evidence>
<gene>
    <name evidence="1" type="primary">murA</name>
    <name type="ordered locus">Msil_1429</name>
</gene>
<proteinExistence type="inferred from homology"/>
<comment type="function">
    <text evidence="1">Cell wall formation. Adds enolpyruvyl to UDP-N-acetylglucosamine.</text>
</comment>
<comment type="catalytic activity">
    <reaction evidence="1">
        <text>phosphoenolpyruvate + UDP-N-acetyl-alpha-D-glucosamine = UDP-N-acetyl-3-O-(1-carboxyvinyl)-alpha-D-glucosamine + phosphate</text>
        <dbReference type="Rhea" id="RHEA:18681"/>
        <dbReference type="ChEBI" id="CHEBI:43474"/>
        <dbReference type="ChEBI" id="CHEBI:57705"/>
        <dbReference type="ChEBI" id="CHEBI:58702"/>
        <dbReference type="ChEBI" id="CHEBI:68483"/>
        <dbReference type="EC" id="2.5.1.7"/>
    </reaction>
</comment>
<comment type="pathway">
    <text evidence="1">Cell wall biogenesis; peptidoglycan biosynthesis.</text>
</comment>
<comment type="subcellular location">
    <subcellularLocation>
        <location evidence="1">Cytoplasm</location>
    </subcellularLocation>
</comment>
<comment type="similarity">
    <text evidence="1">Belongs to the EPSP synthase family. MurA subfamily.</text>
</comment>
<feature type="chain" id="PRO_1000119120" description="UDP-N-acetylglucosamine 1-carboxyvinyltransferase">
    <location>
        <begin position="1"/>
        <end position="429"/>
    </location>
</feature>
<feature type="active site" description="Proton donor" evidence="1">
    <location>
        <position position="126"/>
    </location>
</feature>
<feature type="binding site" evidence="1">
    <location>
        <begin position="22"/>
        <end position="23"/>
    </location>
    <ligand>
        <name>phosphoenolpyruvate</name>
        <dbReference type="ChEBI" id="CHEBI:58702"/>
    </ligand>
</feature>
<feature type="binding site" evidence="1">
    <location>
        <position position="102"/>
    </location>
    <ligand>
        <name>UDP-N-acetyl-alpha-D-glucosamine</name>
        <dbReference type="ChEBI" id="CHEBI:57705"/>
    </ligand>
</feature>
<feature type="binding site" evidence="1">
    <location>
        <begin position="131"/>
        <end position="135"/>
    </location>
    <ligand>
        <name>UDP-N-acetyl-alpha-D-glucosamine</name>
        <dbReference type="ChEBI" id="CHEBI:57705"/>
    </ligand>
</feature>
<feature type="binding site" evidence="1">
    <location>
        <position position="316"/>
    </location>
    <ligand>
        <name>UDP-N-acetyl-alpha-D-glucosamine</name>
        <dbReference type="ChEBI" id="CHEBI:57705"/>
    </ligand>
</feature>
<feature type="binding site" evidence="1">
    <location>
        <position position="338"/>
    </location>
    <ligand>
        <name>UDP-N-acetyl-alpha-D-glucosamine</name>
        <dbReference type="ChEBI" id="CHEBI:57705"/>
    </ligand>
</feature>
<feature type="modified residue" description="2-(S-cysteinyl)pyruvic acid O-phosphothioketal" evidence="1">
    <location>
        <position position="126"/>
    </location>
</feature>
<sequence length="429" mass="45127">MDRIRIVGGQELNGVIQISGAKNAALPLMIASLLTAETLTLDNLPNLADVNMLLRILGHHGVDHSVDGRRLGAAPNASRPVHLTARDIVDTTAPYELVSKMRASFWVIAPLLARMGEAKVSLPGGCAIGTRPVDLLIMALEKLGASVEIEAGYVHAKAPKGLRGAEIKFPKVTVGGTHTALMAASLAHGHTRIVNAAREPEVVDLAECLVKMGARIKGAGQSVIDVEGVARLNGASHRVLPDRIEAGTYAIAAAMAGGDVMLEGAEAGLLQSALDVLVEAGATVNVVNEGIRVQRNGAGLMPVDIVTAPFPGFPTDLQAQFMALMTKAKGQSRITETIFENRFMHVQELARLGAHIRLDGDVALVDGVERLEGAPVMATDLRASVSLVIAALAAEGETMVNRVYHLDRGFEHLETKLGGCGAIIERLSG</sequence>
<organism>
    <name type="scientific">Methylocella silvestris (strain DSM 15510 / CIP 108128 / LMG 27833 / NCIMB 13906 / BL2)</name>
    <dbReference type="NCBI Taxonomy" id="395965"/>
    <lineage>
        <taxon>Bacteria</taxon>
        <taxon>Pseudomonadati</taxon>
        <taxon>Pseudomonadota</taxon>
        <taxon>Alphaproteobacteria</taxon>
        <taxon>Hyphomicrobiales</taxon>
        <taxon>Beijerinckiaceae</taxon>
        <taxon>Methylocella</taxon>
    </lineage>
</organism>
<reference key="1">
    <citation type="journal article" date="2010" name="J. Bacteriol.">
        <title>Complete genome sequence of the aerobic facultative methanotroph Methylocella silvestris BL2.</title>
        <authorList>
            <person name="Chen Y."/>
            <person name="Crombie A."/>
            <person name="Rahman M.T."/>
            <person name="Dedysh S.N."/>
            <person name="Liesack W."/>
            <person name="Stott M.B."/>
            <person name="Alam M."/>
            <person name="Theisen A.R."/>
            <person name="Murrell J.C."/>
            <person name="Dunfield P.F."/>
        </authorList>
    </citation>
    <scope>NUCLEOTIDE SEQUENCE [LARGE SCALE GENOMIC DNA]</scope>
    <source>
        <strain>DSM 15510 / CIP 108128 / LMG 27833 / NCIMB 13906 / BL2</strain>
    </source>
</reference>
<keyword id="KW-0131">Cell cycle</keyword>
<keyword id="KW-0132">Cell division</keyword>
<keyword id="KW-0133">Cell shape</keyword>
<keyword id="KW-0961">Cell wall biogenesis/degradation</keyword>
<keyword id="KW-0963">Cytoplasm</keyword>
<keyword id="KW-0573">Peptidoglycan synthesis</keyword>
<keyword id="KW-0670">Pyruvate</keyword>
<keyword id="KW-1185">Reference proteome</keyword>
<keyword id="KW-0808">Transferase</keyword>
<dbReference type="EC" id="2.5.1.7" evidence="1"/>
<dbReference type="EMBL" id="CP001280">
    <property type="protein sequence ID" value="ACK50394.1"/>
    <property type="molecule type" value="Genomic_DNA"/>
</dbReference>
<dbReference type="RefSeq" id="WP_012590464.1">
    <property type="nucleotide sequence ID" value="NC_011666.1"/>
</dbReference>
<dbReference type="SMR" id="B8ESQ9"/>
<dbReference type="STRING" id="395965.Msil_1429"/>
<dbReference type="KEGG" id="msl:Msil_1429"/>
<dbReference type="eggNOG" id="COG0766">
    <property type="taxonomic scope" value="Bacteria"/>
</dbReference>
<dbReference type="HOGENOM" id="CLU_027387_0_0_5"/>
<dbReference type="OrthoDB" id="9803760at2"/>
<dbReference type="UniPathway" id="UPA00219"/>
<dbReference type="Proteomes" id="UP000002257">
    <property type="component" value="Chromosome"/>
</dbReference>
<dbReference type="GO" id="GO:0005737">
    <property type="term" value="C:cytoplasm"/>
    <property type="evidence" value="ECO:0007669"/>
    <property type="project" value="UniProtKB-SubCell"/>
</dbReference>
<dbReference type="GO" id="GO:0008760">
    <property type="term" value="F:UDP-N-acetylglucosamine 1-carboxyvinyltransferase activity"/>
    <property type="evidence" value="ECO:0007669"/>
    <property type="project" value="UniProtKB-UniRule"/>
</dbReference>
<dbReference type="GO" id="GO:0051301">
    <property type="term" value="P:cell division"/>
    <property type="evidence" value="ECO:0007669"/>
    <property type="project" value="UniProtKB-KW"/>
</dbReference>
<dbReference type="GO" id="GO:0071555">
    <property type="term" value="P:cell wall organization"/>
    <property type="evidence" value="ECO:0007669"/>
    <property type="project" value="UniProtKB-KW"/>
</dbReference>
<dbReference type="GO" id="GO:0009252">
    <property type="term" value="P:peptidoglycan biosynthetic process"/>
    <property type="evidence" value="ECO:0007669"/>
    <property type="project" value="UniProtKB-UniRule"/>
</dbReference>
<dbReference type="GO" id="GO:0008360">
    <property type="term" value="P:regulation of cell shape"/>
    <property type="evidence" value="ECO:0007669"/>
    <property type="project" value="UniProtKB-KW"/>
</dbReference>
<dbReference type="GO" id="GO:0019277">
    <property type="term" value="P:UDP-N-acetylgalactosamine biosynthetic process"/>
    <property type="evidence" value="ECO:0007669"/>
    <property type="project" value="InterPro"/>
</dbReference>
<dbReference type="CDD" id="cd01555">
    <property type="entry name" value="UdpNAET"/>
    <property type="match status" value="1"/>
</dbReference>
<dbReference type="FunFam" id="3.65.10.10:FF:000001">
    <property type="entry name" value="UDP-N-acetylglucosamine 1-carboxyvinyltransferase"/>
    <property type="match status" value="1"/>
</dbReference>
<dbReference type="Gene3D" id="3.65.10.10">
    <property type="entry name" value="Enolpyruvate transferase domain"/>
    <property type="match status" value="2"/>
</dbReference>
<dbReference type="HAMAP" id="MF_00111">
    <property type="entry name" value="MurA"/>
    <property type="match status" value="1"/>
</dbReference>
<dbReference type="InterPro" id="IPR001986">
    <property type="entry name" value="Enolpyruvate_Tfrase_dom"/>
</dbReference>
<dbReference type="InterPro" id="IPR036968">
    <property type="entry name" value="Enolpyruvate_Tfrase_sf"/>
</dbReference>
<dbReference type="InterPro" id="IPR050068">
    <property type="entry name" value="MurA_subfamily"/>
</dbReference>
<dbReference type="InterPro" id="IPR013792">
    <property type="entry name" value="RNA3'P_cycl/enolpyr_Trfase_a/b"/>
</dbReference>
<dbReference type="InterPro" id="IPR005750">
    <property type="entry name" value="UDP_GlcNAc_COvinyl_MurA"/>
</dbReference>
<dbReference type="NCBIfam" id="TIGR01072">
    <property type="entry name" value="murA"/>
    <property type="match status" value="1"/>
</dbReference>
<dbReference type="NCBIfam" id="NF006873">
    <property type="entry name" value="PRK09369.1"/>
    <property type="match status" value="1"/>
</dbReference>
<dbReference type="PANTHER" id="PTHR43783">
    <property type="entry name" value="UDP-N-ACETYLGLUCOSAMINE 1-CARBOXYVINYLTRANSFERASE"/>
    <property type="match status" value="1"/>
</dbReference>
<dbReference type="PANTHER" id="PTHR43783:SF1">
    <property type="entry name" value="UDP-N-ACETYLGLUCOSAMINE 1-CARBOXYVINYLTRANSFERASE"/>
    <property type="match status" value="1"/>
</dbReference>
<dbReference type="Pfam" id="PF00275">
    <property type="entry name" value="EPSP_synthase"/>
    <property type="match status" value="1"/>
</dbReference>
<dbReference type="SUPFAM" id="SSF55205">
    <property type="entry name" value="EPT/RTPC-like"/>
    <property type="match status" value="1"/>
</dbReference>
<name>MURA_METSB</name>
<protein>
    <recommendedName>
        <fullName evidence="1">UDP-N-acetylglucosamine 1-carboxyvinyltransferase</fullName>
        <ecNumber evidence="1">2.5.1.7</ecNumber>
    </recommendedName>
    <alternativeName>
        <fullName evidence="1">Enoylpyruvate transferase</fullName>
    </alternativeName>
    <alternativeName>
        <fullName evidence="1">UDP-N-acetylglucosamine enolpyruvyl transferase</fullName>
        <shortName evidence="1">EPT</shortName>
    </alternativeName>
</protein>